<feature type="chain" id="PRO_0000266748" description="Small ribosomal subunit protein bS21">
    <location>
        <begin position="1"/>
        <end position="68"/>
    </location>
</feature>
<dbReference type="EMBL" id="CP000143">
    <property type="protein sequence ID" value="ABA79894.1"/>
    <property type="molecule type" value="Genomic_DNA"/>
</dbReference>
<dbReference type="RefSeq" id="WP_002720900.1">
    <property type="nucleotide sequence ID" value="NZ_CP030271.1"/>
</dbReference>
<dbReference type="RefSeq" id="YP_353795.1">
    <property type="nucleotide sequence ID" value="NC_007493.2"/>
</dbReference>
<dbReference type="SMR" id="Q3IZZ0"/>
<dbReference type="STRING" id="272943.RSP_0718"/>
<dbReference type="DNASU" id="3718082"/>
<dbReference type="EnsemblBacteria" id="ABA79894">
    <property type="protein sequence ID" value="ABA79894"/>
    <property type="gene ID" value="RSP_0718"/>
</dbReference>
<dbReference type="GeneID" id="67447468"/>
<dbReference type="KEGG" id="rsp:RSP_0718"/>
<dbReference type="PATRIC" id="fig|272943.9.peg.2671"/>
<dbReference type="eggNOG" id="COG0828">
    <property type="taxonomic scope" value="Bacteria"/>
</dbReference>
<dbReference type="OrthoDB" id="9811907at2"/>
<dbReference type="PhylomeDB" id="Q3IZZ0"/>
<dbReference type="Proteomes" id="UP000002703">
    <property type="component" value="Chromosome 1"/>
</dbReference>
<dbReference type="GO" id="GO:1990904">
    <property type="term" value="C:ribonucleoprotein complex"/>
    <property type="evidence" value="ECO:0007669"/>
    <property type="project" value="UniProtKB-KW"/>
</dbReference>
<dbReference type="GO" id="GO:0005840">
    <property type="term" value="C:ribosome"/>
    <property type="evidence" value="ECO:0007669"/>
    <property type="project" value="UniProtKB-KW"/>
</dbReference>
<dbReference type="GO" id="GO:0003735">
    <property type="term" value="F:structural constituent of ribosome"/>
    <property type="evidence" value="ECO:0007669"/>
    <property type="project" value="InterPro"/>
</dbReference>
<dbReference type="GO" id="GO:0006412">
    <property type="term" value="P:translation"/>
    <property type="evidence" value="ECO:0007669"/>
    <property type="project" value="UniProtKB-UniRule"/>
</dbReference>
<dbReference type="Gene3D" id="1.20.5.1150">
    <property type="entry name" value="Ribosomal protein S8"/>
    <property type="match status" value="1"/>
</dbReference>
<dbReference type="HAMAP" id="MF_00358">
    <property type="entry name" value="Ribosomal_bS21"/>
    <property type="match status" value="1"/>
</dbReference>
<dbReference type="InterPro" id="IPR001911">
    <property type="entry name" value="Ribosomal_bS21"/>
</dbReference>
<dbReference type="InterPro" id="IPR018278">
    <property type="entry name" value="Ribosomal_bS21_CS"/>
</dbReference>
<dbReference type="InterPro" id="IPR038380">
    <property type="entry name" value="Ribosomal_bS21_sf"/>
</dbReference>
<dbReference type="NCBIfam" id="TIGR00030">
    <property type="entry name" value="S21p"/>
    <property type="match status" value="1"/>
</dbReference>
<dbReference type="PANTHER" id="PTHR21109">
    <property type="entry name" value="MITOCHONDRIAL 28S RIBOSOMAL PROTEIN S21"/>
    <property type="match status" value="1"/>
</dbReference>
<dbReference type="PANTHER" id="PTHR21109:SF0">
    <property type="entry name" value="SMALL RIBOSOMAL SUBUNIT PROTEIN BS21M"/>
    <property type="match status" value="1"/>
</dbReference>
<dbReference type="Pfam" id="PF01165">
    <property type="entry name" value="Ribosomal_S21"/>
    <property type="match status" value="1"/>
</dbReference>
<dbReference type="PROSITE" id="PS01181">
    <property type="entry name" value="RIBOSOMAL_S21"/>
    <property type="match status" value="1"/>
</dbReference>
<organism>
    <name type="scientific">Cereibacter sphaeroides (strain ATCC 17023 / DSM 158 / JCM 6121 / CCUG 31486 / LMG 2827 / NBRC 12203 / NCIMB 8253 / ATH 2.4.1.)</name>
    <name type="common">Rhodobacter sphaeroides</name>
    <dbReference type="NCBI Taxonomy" id="272943"/>
    <lineage>
        <taxon>Bacteria</taxon>
        <taxon>Pseudomonadati</taxon>
        <taxon>Pseudomonadota</taxon>
        <taxon>Alphaproteobacteria</taxon>
        <taxon>Rhodobacterales</taxon>
        <taxon>Paracoccaceae</taxon>
        <taxon>Cereibacter</taxon>
    </lineage>
</organism>
<protein>
    <recommendedName>
        <fullName evidence="1">Small ribosomal subunit protein bS21</fullName>
    </recommendedName>
    <alternativeName>
        <fullName evidence="2">30S ribosomal protein S21</fullName>
    </alternativeName>
</protein>
<reference key="1">
    <citation type="submission" date="2005-09" db="EMBL/GenBank/DDBJ databases">
        <title>Complete sequence of chromosome 1 of Rhodobacter sphaeroides 2.4.1.</title>
        <authorList>
            <person name="Copeland A."/>
            <person name="Lucas S."/>
            <person name="Lapidus A."/>
            <person name="Barry K."/>
            <person name="Detter J.C."/>
            <person name="Glavina T."/>
            <person name="Hammon N."/>
            <person name="Israni S."/>
            <person name="Pitluck S."/>
            <person name="Richardson P."/>
            <person name="Mackenzie C."/>
            <person name="Choudhary M."/>
            <person name="Larimer F."/>
            <person name="Hauser L.J."/>
            <person name="Land M."/>
            <person name="Donohue T.J."/>
            <person name="Kaplan S."/>
        </authorList>
    </citation>
    <scope>NUCLEOTIDE SEQUENCE [LARGE SCALE GENOMIC DNA]</scope>
    <source>
        <strain>ATCC 17023 / DSM 158 / JCM 6121 / CCUG 31486 / LMG 2827 / NBRC 12203 / NCIMB 8253 / ATH 2.4.1.</strain>
    </source>
</reference>
<evidence type="ECO:0000255" key="1">
    <source>
        <dbReference type="HAMAP-Rule" id="MF_00358"/>
    </source>
</evidence>
<evidence type="ECO:0000305" key="2"/>
<gene>
    <name evidence="1" type="primary">rpsU</name>
    <name type="ordered locus">RHOS4_23260</name>
    <name type="ORF">RSP_0718</name>
</gene>
<name>RS21_CERS4</name>
<accession>Q3IZZ0</accession>
<comment type="similarity">
    <text evidence="1">Belongs to the bacterial ribosomal protein bS21 family.</text>
</comment>
<proteinExistence type="inferred from homology"/>
<sequence>MQVSVRDNNVEQALRALKKKLQREGVFREMKLKQHFEKPSVKRAREQAEAVRRARKLARKKAQREGAL</sequence>
<keyword id="KW-1185">Reference proteome</keyword>
<keyword id="KW-0687">Ribonucleoprotein</keyword>
<keyword id="KW-0689">Ribosomal protein</keyword>